<feature type="chain" id="PRO_0000165567" description="Holliday junction branch migration complex subunit RuvB">
    <location>
        <begin position="1"/>
        <end position="357"/>
    </location>
</feature>
<feature type="region of interest" description="Large ATPase domain (RuvB-L)" evidence="1">
    <location>
        <begin position="1"/>
        <end position="185"/>
    </location>
</feature>
<feature type="region of interest" description="Disordered" evidence="2">
    <location>
        <begin position="1"/>
        <end position="20"/>
    </location>
</feature>
<feature type="region of interest" description="Small ATPAse domain (RuvB-S)" evidence="1">
    <location>
        <begin position="186"/>
        <end position="256"/>
    </location>
</feature>
<feature type="region of interest" description="Head domain (RuvB-H)" evidence="1">
    <location>
        <begin position="259"/>
        <end position="357"/>
    </location>
</feature>
<feature type="binding site" evidence="1">
    <location>
        <position position="24"/>
    </location>
    <ligand>
        <name>ATP</name>
        <dbReference type="ChEBI" id="CHEBI:30616"/>
    </ligand>
</feature>
<feature type="binding site" evidence="1">
    <location>
        <position position="25"/>
    </location>
    <ligand>
        <name>ATP</name>
        <dbReference type="ChEBI" id="CHEBI:30616"/>
    </ligand>
</feature>
<feature type="binding site" evidence="1">
    <location>
        <position position="66"/>
    </location>
    <ligand>
        <name>ATP</name>
        <dbReference type="ChEBI" id="CHEBI:30616"/>
    </ligand>
</feature>
<feature type="binding site" evidence="1">
    <location>
        <position position="69"/>
    </location>
    <ligand>
        <name>ATP</name>
        <dbReference type="ChEBI" id="CHEBI:30616"/>
    </ligand>
</feature>
<feature type="binding site" evidence="1">
    <location>
        <position position="70"/>
    </location>
    <ligand>
        <name>ATP</name>
        <dbReference type="ChEBI" id="CHEBI:30616"/>
    </ligand>
</feature>
<feature type="binding site" evidence="1">
    <location>
        <position position="70"/>
    </location>
    <ligand>
        <name>Mg(2+)</name>
        <dbReference type="ChEBI" id="CHEBI:18420"/>
    </ligand>
</feature>
<feature type="binding site" evidence="1">
    <location>
        <position position="71"/>
    </location>
    <ligand>
        <name>ATP</name>
        <dbReference type="ChEBI" id="CHEBI:30616"/>
    </ligand>
</feature>
<feature type="binding site" evidence="1">
    <location>
        <begin position="132"/>
        <end position="134"/>
    </location>
    <ligand>
        <name>ATP</name>
        <dbReference type="ChEBI" id="CHEBI:30616"/>
    </ligand>
</feature>
<feature type="binding site" evidence="1">
    <location>
        <position position="175"/>
    </location>
    <ligand>
        <name>ATP</name>
        <dbReference type="ChEBI" id="CHEBI:30616"/>
    </ligand>
</feature>
<feature type="binding site" evidence="1">
    <location>
        <position position="185"/>
    </location>
    <ligand>
        <name>ATP</name>
        <dbReference type="ChEBI" id="CHEBI:30616"/>
    </ligand>
</feature>
<feature type="binding site" evidence="1">
    <location>
        <position position="222"/>
    </location>
    <ligand>
        <name>ATP</name>
        <dbReference type="ChEBI" id="CHEBI:30616"/>
    </ligand>
</feature>
<feature type="binding site" evidence="1">
    <location>
        <position position="314"/>
    </location>
    <ligand>
        <name>DNA</name>
        <dbReference type="ChEBI" id="CHEBI:16991"/>
    </ligand>
</feature>
<feature type="binding site" evidence="1">
    <location>
        <position position="319"/>
    </location>
    <ligand>
        <name>DNA</name>
        <dbReference type="ChEBI" id="CHEBI:16991"/>
    </ligand>
</feature>
<name>RUVB_NOCFA</name>
<sequence length="357" mass="38220">MDDHDDSPVSPSFLKSDGEIEASLRPKSLDDFIGQPRVREQLALVLRGAKQRGSTPDHVLLSGPPGLGKTSMAMIIAAELGTALRITSGPALERAGDLAAMLSNLVEGDVLFIDEIHRIARPAEEMLYLAMEDFRVDVVVGKGPGATSIPLDIAPFTLVGATTRSGALTGPLRDRFGFTGHMDFYEPGELLRILERSAQILGVRIETDAAAEIAGRSRGTPRIANRLLRRVRDYAEVRADGIVTLPVARAALEVYDVDTLGLDRLDRAVLDALVRGFHGGPVGVSTLAVAVGEEATTVEEVCEPFLVRAGLVARTPRGRVATAAAWEHLGLVPPPDLVFGSIEVRGRTSQPTLDLFD</sequence>
<evidence type="ECO:0000255" key="1">
    <source>
        <dbReference type="HAMAP-Rule" id="MF_00016"/>
    </source>
</evidence>
<evidence type="ECO:0000256" key="2">
    <source>
        <dbReference type="SAM" id="MobiDB-lite"/>
    </source>
</evidence>
<keyword id="KW-0067">ATP-binding</keyword>
<keyword id="KW-0963">Cytoplasm</keyword>
<keyword id="KW-0227">DNA damage</keyword>
<keyword id="KW-0233">DNA recombination</keyword>
<keyword id="KW-0234">DNA repair</keyword>
<keyword id="KW-0238">DNA-binding</keyword>
<keyword id="KW-0378">Hydrolase</keyword>
<keyword id="KW-0547">Nucleotide-binding</keyword>
<keyword id="KW-1185">Reference proteome</keyword>
<protein>
    <recommendedName>
        <fullName evidence="1">Holliday junction branch migration complex subunit RuvB</fullName>
        <ecNumber evidence="1">3.6.4.-</ecNumber>
    </recommendedName>
</protein>
<proteinExistence type="inferred from homology"/>
<organism>
    <name type="scientific">Nocardia farcinica (strain IFM 10152)</name>
    <dbReference type="NCBI Taxonomy" id="247156"/>
    <lineage>
        <taxon>Bacteria</taxon>
        <taxon>Bacillati</taxon>
        <taxon>Actinomycetota</taxon>
        <taxon>Actinomycetes</taxon>
        <taxon>Mycobacteriales</taxon>
        <taxon>Nocardiaceae</taxon>
        <taxon>Nocardia</taxon>
    </lineage>
</organism>
<comment type="function">
    <text evidence="1">The RuvA-RuvB-RuvC complex processes Holliday junction (HJ) DNA during genetic recombination and DNA repair, while the RuvA-RuvB complex plays an important role in the rescue of blocked DNA replication forks via replication fork reversal (RFR). RuvA specifically binds to HJ cruciform DNA, conferring on it an open structure. The RuvB hexamer acts as an ATP-dependent pump, pulling dsDNA into and through the RuvAB complex. RuvB forms 2 homohexamers on either side of HJ DNA bound by 1 or 2 RuvA tetramers; 4 subunits per hexamer contact DNA at a time. Coordinated motions by a converter formed by DNA-disengaged RuvB subunits stimulates ATP hydrolysis and nucleotide exchange. Immobilization of the converter enables RuvB to convert the ATP-contained energy into a lever motion, pulling 2 nucleotides of DNA out of the RuvA tetramer per ATP hydrolyzed, thus driving DNA branch migration. The RuvB motors rotate together with the DNA substrate, which together with the progressing nucleotide cycle form the mechanistic basis for DNA recombination by continuous HJ branch migration. Branch migration allows RuvC to scan DNA until it finds its consensus sequence, where it cleaves and resolves cruciform DNA.</text>
</comment>
<comment type="catalytic activity">
    <reaction evidence="1">
        <text>ATP + H2O = ADP + phosphate + H(+)</text>
        <dbReference type="Rhea" id="RHEA:13065"/>
        <dbReference type="ChEBI" id="CHEBI:15377"/>
        <dbReference type="ChEBI" id="CHEBI:15378"/>
        <dbReference type="ChEBI" id="CHEBI:30616"/>
        <dbReference type="ChEBI" id="CHEBI:43474"/>
        <dbReference type="ChEBI" id="CHEBI:456216"/>
    </reaction>
</comment>
<comment type="subunit">
    <text evidence="1">Homohexamer. Forms an RuvA(8)-RuvB(12)-Holliday junction (HJ) complex. HJ DNA is sandwiched between 2 RuvA tetramers; dsDNA enters through RuvA and exits via RuvB. An RuvB hexamer assembles on each DNA strand where it exits the tetramer. Each RuvB hexamer is contacted by two RuvA subunits (via domain III) on 2 adjacent RuvB subunits; this complex drives branch migration. In the full resolvosome a probable DNA-RuvA(4)-RuvB(12)-RuvC(2) complex forms which resolves the HJ.</text>
</comment>
<comment type="subcellular location">
    <subcellularLocation>
        <location evidence="1">Cytoplasm</location>
    </subcellularLocation>
</comment>
<comment type="domain">
    <text evidence="1">Has 3 domains, the large (RuvB-L) and small ATPase (RuvB-S) domains and the C-terminal head (RuvB-H) domain. The head domain binds DNA, while the ATPase domains jointly bind ATP, ADP or are empty depending on the state of the subunit in the translocation cycle. During a single DNA translocation step the structure of each domain remains the same, but their relative positions change.</text>
</comment>
<comment type="similarity">
    <text evidence="1">Belongs to the RuvB family.</text>
</comment>
<dbReference type="EC" id="3.6.4.-" evidence="1"/>
<dbReference type="EMBL" id="AP006618">
    <property type="protein sequence ID" value="BAD58543.1"/>
    <property type="molecule type" value="Genomic_DNA"/>
</dbReference>
<dbReference type="RefSeq" id="WP_011210228.1">
    <property type="nucleotide sequence ID" value="NC_006361.1"/>
</dbReference>
<dbReference type="SMR" id="Q5YTE8"/>
<dbReference type="STRING" id="247156.NFA_36950"/>
<dbReference type="GeneID" id="61134388"/>
<dbReference type="KEGG" id="nfa:NFA_36950"/>
<dbReference type="eggNOG" id="COG2255">
    <property type="taxonomic scope" value="Bacteria"/>
</dbReference>
<dbReference type="HOGENOM" id="CLU_055599_1_0_11"/>
<dbReference type="OrthoDB" id="9804478at2"/>
<dbReference type="Proteomes" id="UP000006820">
    <property type="component" value="Chromosome"/>
</dbReference>
<dbReference type="GO" id="GO:0005737">
    <property type="term" value="C:cytoplasm"/>
    <property type="evidence" value="ECO:0007669"/>
    <property type="project" value="UniProtKB-SubCell"/>
</dbReference>
<dbReference type="GO" id="GO:0048476">
    <property type="term" value="C:Holliday junction resolvase complex"/>
    <property type="evidence" value="ECO:0007669"/>
    <property type="project" value="UniProtKB-UniRule"/>
</dbReference>
<dbReference type="GO" id="GO:0005524">
    <property type="term" value="F:ATP binding"/>
    <property type="evidence" value="ECO:0007669"/>
    <property type="project" value="UniProtKB-UniRule"/>
</dbReference>
<dbReference type="GO" id="GO:0016887">
    <property type="term" value="F:ATP hydrolysis activity"/>
    <property type="evidence" value="ECO:0007669"/>
    <property type="project" value="InterPro"/>
</dbReference>
<dbReference type="GO" id="GO:0000400">
    <property type="term" value="F:four-way junction DNA binding"/>
    <property type="evidence" value="ECO:0007669"/>
    <property type="project" value="UniProtKB-UniRule"/>
</dbReference>
<dbReference type="GO" id="GO:0009378">
    <property type="term" value="F:four-way junction helicase activity"/>
    <property type="evidence" value="ECO:0007669"/>
    <property type="project" value="InterPro"/>
</dbReference>
<dbReference type="GO" id="GO:0006310">
    <property type="term" value="P:DNA recombination"/>
    <property type="evidence" value="ECO:0007669"/>
    <property type="project" value="UniProtKB-UniRule"/>
</dbReference>
<dbReference type="GO" id="GO:0006281">
    <property type="term" value="P:DNA repair"/>
    <property type="evidence" value="ECO:0007669"/>
    <property type="project" value="UniProtKB-UniRule"/>
</dbReference>
<dbReference type="CDD" id="cd00009">
    <property type="entry name" value="AAA"/>
    <property type="match status" value="1"/>
</dbReference>
<dbReference type="Gene3D" id="1.10.8.60">
    <property type="match status" value="1"/>
</dbReference>
<dbReference type="Gene3D" id="3.40.50.300">
    <property type="entry name" value="P-loop containing nucleotide triphosphate hydrolases"/>
    <property type="match status" value="1"/>
</dbReference>
<dbReference type="Gene3D" id="1.10.10.10">
    <property type="entry name" value="Winged helix-like DNA-binding domain superfamily/Winged helix DNA-binding domain"/>
    <property type="match status" value="1"/>
</dbReference>
<dbReference type="HAMAP" id="MF_00016">
    <property type="entry name" value="DNA_HJ_migration_RuvB"/>
    <property type="match status" value="1"/>
</dbReference>
<dbReference type="InterPro" id="IPR003593">
    <property type="entry name" value="AAA+_ATPase"/>
</dbReference>
<dbReference type="InterPro" id="IPR041445">
    <property type="entry name" value="AAA_lid_4"/>
</dbReference>
<dbReference type="InterPro" id="IPR004605">
    <property type="entry name" value="DNA_helicase_Holl-junc_RuvB"/>
</dbReference>
<dbReference type="InterPro" id="IPR027417">
    <property type="entry name" value="P-loop_NTPase"/>
</dbReference>
<dbReference type="InterPro" id="IPR008824">
    <property type="entry name" value="RuvB-like_N"/>
</dbReference>
<dbReference type="InterPro" id="IPR008823">
    <property type="entry name" value="RuvB_C"/>
</dbReference>
<dbReference type="InterPro" id="IPR036388">
    <property type="entry name" value="WH-like_DNA-bd_sf"/>
</dbReference>
<dbReference type="InterPro" id="IPR036390">
    <property type="entry name" value="WH_DNA-bd_sf"/>
</dbReference>
<dbReference type="NCBIfam" id="NF000868">
    <property type="entry name" value="PRK00080.1"/>
    <property type="match status" value="1"/>
</dbReference>
<dbReference type="NCBIfam" id="TIGR00635">
    <property type="entry name" value="ruvB"/>
    <property type="match status" value="1"/>
</dbReference>
<dbReference type="PANTHER" id="PTHR42848">
    <property type="match status" value="1"/>
</dbReference>
<dbReference type="PANTHER" id="PTHR42848:SF1">
    <property type="entry name" value="HOLLIDAY JUNCTION BRANCH MIGRATION COMPLEX SUBUNIT RUVB"/>
    <property type="match status" value="1"/>
</dbReference>
<dbReference type="Pfam" id="PF17864">
    <property type="entry name" value="AAA_lid_4"/>
    <property type="match status" value="1"/>
</dbReference>
<dbReference type="Pfam" id="PF05491">
    <property type="entry name" value="RuvB_C"/>
    <property type="match status" value="1"/>
</dbReference>
<dbReference type="Pfam" id="PF05496">
    <property type="entry name" value="RuvB_N"/>
    <property type="match status" value="1"/>
</dbReference>
<dbReference type="SMART" id="SM00382">
    <property type="entry name" value="AAA"/>
    <property type="match status" value="1"/>
</dbReference>
<dbReference type="SUPFAM" id="SSF52540">
    <property type="entry name" value="P-loop containing nucleoside triphosphate hydrolases"/>
    <property type="match status" value="1"/>
</dbReference>
<dbReference type="SUPFAM" id="SSF46785">
    <property type="entry name" value="Winged helix' DNA-binding domain"/>
    <property type="match status" value="1"/>
</dbReference>
<accession>Q5YTE8</accession>
<reference key="1">
    <citation type="journal article" date="2004" name="Proc. Natl. Acad. Sci. U.S.A.">
        <title>The complete genomic sequence of Nocardia farcinica IFM 10152.</title>
        <authorList>
            <person name="Ishikawa J."/>
            <person name="Yamashita A."/>
            <person name="Mikami Y."/>
            <person name="Hoshino Y."/>
            <person name="Kurita H."/>
            <person name="Hotta K."/>
            <person name="Shiba T."/>
            <person name="Hattori M."/>
        </authorList>
    </citation>
    <scope>NUCLEOTIDE SEQUENCE [LARGE SCALE GENOMIC DNA]</scope>
    <source>
        <strain>IFM 10152</strain>
    </source>
</reference>
<gene>
    <name evidence="1" type="primary">ruvB</name>
    <name type="ordered locus">NFA_36950</name>
</gene>